<dbReference type="EMBL" id="BX640443">
    <property type="protein sequence ID" value="CAE32514.1"/>
    <property type="molecule type" value="Genomic_DNA"/>
</dbReference>
<dbReference type="RefSeq" id="WP_003812873.1">
    <property type="nucleotide sequence ID" value="NC_002927.3"/>
</dbReference>
<dbReference type="SMR" id="Q7WKT7"/>
<dbReference type="GeneID" id="93204359"/>
<dbReference type="KEGG" id="bbr:BB2017"/>
<dbReference type="eggNOG" id="COG2127">
    <property type="taxonomic scope" value="Bacteria"/>
</dbReference>
<dbReference type="HOGENOM" id="CLU_134358_2_1_4"/>
<dbReference type="Proteomes" id="UP000001027">
    <property type="component" value="Chromosome"/>
</dbReference>
<dbReference type="GO" id="GO:0030163">
    <property type="term" value="P:protein catabolic process"/>
    <property type="evidence" value="ECO:0007669"/>
    <property type="project" value="InterPro"/>
</dbReference>
<dbReference type="GO" id="GO:0006508">
    <property type="term" value="P:proteolysis"/>
    <property type="evidence" value="ECO:0007669"/>
    <property type="project" value="UniProtKB-UniRule"/>
</dbReference>
<dbReference type="FunFam" id="3.30.1390.10:FF:000002">
    <property type="entry name" value="ATP-dependent Clp protease adapter protein ClpS"/>
    <property type="match status" value="1"/>
</dbReference>
<dbReference type="Gene3D" id="3.30.1390.10">
    <property type="match status" value="1"/>
</dbReference>
<dbReference type="HAMAP" id="MF_00302">
    <property type="entry name" value="ClpS"/>
    <property type="match status" value="1"/>
</dbReference>
<dbReference type="InterPro" id="IPR022935">
    <property type="entry name" value="ClpS"/>
</dbReference>
<dbReference type="InterPro" id="IPR003769">
    <property type="entry name" value="ClpS_core"/>
</dbReference>
<dbReference type="InterPro" id="IPR014719">
    <property type="entry name" value="Ribosomal_bL12_C/ClpS-like"/>
</dbReference>
<dbReference type="NCBIfam" id="NF000672">
    <property type="entry name" value="PRK00033.1-5"/>
    <property type="match status" value="1"/>
</dbReference>
<dbReference type="PANTHER" id="PTHR33473:SF19">
    <property type="entry name" value="ATP-DEPENDENT CLP PROTEASE ADAPTER PROTEIN CLPS"/>
    <property type="match status" value="1"/>
</dbReference>
<dbReference type="PANTHER" id="PTHR33473">
    <property type="entry name" value="ATP-DEPENDENT CLP PROTEASE ADAPTER PROTEIN CLPS1, CHLOROPLASTIC"/>
    <property type="match status" value="1"/>
</dbReference>
<dbReference type="Pfam" id="PF02617">
    <property type="entry name" value="ClpS"/>
    <property type="match status" value="1"/>
</dbReference>
<dbReference type="SUPFAM" id="SSF54736">
    <property type="entry name" value="ClpS-like"/>
    <property type="match status" value="1"/>
</dbReference>
<reference key="1">
    <citation type="journal article" date="2003" name="Nat. Genet.">
        <title>Comparative analysis of the genome sequences of Bordetella pertussis, Bordetella parapertussis and Bordetella bronchiseptica.</title>
        <authorList>
            <person name="Parkhill J."/>
            <person name="Sebaihia M."/>
            <person name="Preston A."/>
            <person name="Murphy L.D."/>
            <person name="Thomson N.R."/>
            <person name="Harris D.E."/>
            <person name="Holden M.T.G."/>
            <person name="Churcher C.M."/>
            <person name="Bentley S.D."/>
            <person name="Mungall K.L."/>
            <person name="Cerdeno-Tarraga A.-M."/>
            <person name="Temple L."/>
            <person name="James K.D."/>
            <person name="Harris B."/>
            <person name="Quail M.A."/>
            <person name="Achtman M."/>
            <person name="Atkin R."/>
            <person name="Baker S."/>
            <person name="Basham D."/>
            <person name="Bason N."/>
            <person name="Cherevach I."/>
            <person name="Chillingworth T."/>
            <person name="Collins M."/>
            <person name="Cronin A."/>
            <person name="Davis P."/>
            <person name="Doggett J."/>
            <person name="Feltwell T."/>
            <person name="Goble A."/>
            <person name="Hamlin N."/>
            <person name="Hauser H."/>
            <person name="Holroyd S."/>
            <person name="Jagels K."/>
            <person name="Leather S."/>
            <person name="Moule S."/>
            <person name="Norberczak H."/>
            <person name="O'Neil S."/>
            <person name="Ormond D."/>
            <person name="Price C."/>
            <person name="Rabbinowitsch E."/>
            <person name="Rutter S."/>
            <person name="Sanders M."/>
            <person name="Saunders D."/>
            <person name="Seeger K."/>
            <person name="Sharp S."/>
            <person name="Simmonds M."/>
            <person name="Skelton J."/>
            <person name="Squares R."/>
            <person name="Squares S."/>
            <person name="Stevens K."/>
            <person name="Unwin L."/>
            <person name="Whitehead S."/>
            <person name="Barrell B.G."/>
            <person name="Maskell D.J."/>
        </authorList>
    </citation>
    <scope>NUCLEOTIDE SEQUENCE [LARGE SCALE GENOMIC DNA]</scope>
    <source>
        <strain>ATCC BAA-588 / NCTC 13252 / RB50</strain>
    </source>
</reference>
<evidence type="ECO:0000255" key="1">
    <source>
        <dbReference type="HAMAP-Rule" id="MF_00302"/>
    </source>
</evidence>
<comment type="function">
    <text evidence="1">Involved in the modulation of the specificity of the ClpAP-mediated ATP-dependent protein degradation.</text>
</comment>
<comment type="subunit">
    <text evidence="1">Binds to the N-terminal domain of the chaperone ClpA.</text>
</comment>
<comment type="similarity">
    <text evidence="1">Belongs to the ClpS family.</text>
</comment>
<feature type="chain" id="PRO_0000215687" description="ATP-dependent Clp protease adapter protein ClpS">
    <location>
        <begin position="1"/>
        <end position="104"/>
    </location>
</feature>
<accession>Q7WKT7</accession>
<name>CLPS_BORBR</name>
<protein>
    <recommendedName>
        <fullName evidence="1">ATP-dependent Clp protease adapter protein ClpS</fullName>
    </recommendedName>
</protein>
<gene>
    <name evidence="1" type="primary">clpS</name>
    <name type="ordered locus">BB2017</name>
</gene>
<proteinExistence type="inferred from homology"/>
<organism>
    <name type="scientific">Bordetella bronchiseptica (strain ATCC BAA-588 / NCTC 13252 / RB50)</name>
    <name type="common">Alcaligenes bronchisepticus</name>
    <dbReference type="NCBI Taxonomy" id="257310"/>
    <lineage>
        <taxon>Bacteria</taxon>
        <taxon>Pseudomonadati</taxon>
        <taxon>Pseudomonadota</taxon>
        <taxon>Betaproteobacteria</taxon>
        <taxon>Burkholderiales</taxon>
        <taxon>Alcaligenaceae</taxon>
        <taxon>Bordetella</taxon>
    </lineage>
</organism>
<sequence length="104" mass="11782">MSSTLDTQHDVVVEKQPARTAPPPMYQVVLLNDDYTPMEFVVKVLQKFFGKNSEDATRIMLQVHHEGRAVCGVYPRDLAATRIAQVSQYARARQHPLQCIMEPA</sequence>